<proteinExistence type="evidence at protein level"/>
<accession>Q9BPG7</accession>
<reference key="1">
    <citation type="journal article" date="2001" name="Mol. Biol. Evol.">
        <title>Mechanisms for evolving hypervariability: the case of conopeptides.</title>
        <authorList>
            <person name="Conticello S.G."/>
            <person name="Gilad Y."/>
            <person name="Avidan N."/>
            <person name="Ben-Asher E."/>
            <person name="Levy Z."/>
            <person name="Fainzilber M."/>
        </authorList>
    </citation>
    <scope>NUCLEOTIDE SEQUENCE [MRNA]</scope>
    <source>
        <tissue>Venom duct</tissue>
    </source>
</reference>
<reference key="2">
    <citation type="journal article" date="2012" name="J. Proteome Res.">
        <title>Constrained de novo sequencing of conotoxins.</title>
        <authorList>
            <person name="Bhatia S."/>
            <person name="Kil Y.J."/>
            <person name="Ueberheide B."/>
            <person name="Chait B.T."/>
            <person name="Tayo L."/>
            <person name="Cruz L."/>
            <person name="Lu B."/>
            <person name="Yates J.R. III"/>
            <person name="Bern M."/>
        </authorList>
    </citation>
    <scope>IDENTIFICATION BY MASS SPECTROMETRY</scope>
    <scope>SUBCELLULAR LOCATION</scope>
    <source>
        <tissue>Venom</tissue>
    </source>
</reference>
<organism>
    <name type="scientific">Conus textile</name>
    <name type="common">Cloth-of-gold cone</name>
    <dbReference type="NCBI Taxonomy" id="6494"/>
    <lineage>
        <taxon>Eukaryota</taxon>
        <taxon>Metazoa</taxon>
        <taxon>Spiralia</taxon>
        <taxon>Lophotrochozoa</taxon>
        <taxon>Mollusca</taxon>
        <taxon>Gastropoda</taxon>
        <taxon>Caenogastropoda</taxon>
        <taxon>Neogastropoda</taxon>
        <taxon>Conoidea</taxon>
        <taxon>Conidae</taxon>
        <taxon>Conus</taxon>
        <taxon>Cylinder</taxon>
    </lineage>
</organism>
<keyword id="KW-0165">Cleavage on pair of basic residues</keyword>
<keyword id="KW-1015">Disulfide bond</keyword>
<keyword id="KW-0964">Secreted</keyword>
<keyword id="KW-0732">Signal</keyword>
<keyword id="KW-0800">Toxin</keyword>
<evidence type="ECO:0000250" key="1"/>
<evidence type="ECO:0000255" key="2"/>
<evidence type="ECO:0000269" key="3">
    <source>
    </source>
</evidence>
<evidence type="ECO:0000305" key="4"/>
<evidence type="ECO:0000305" key="5">
    <source>
    </source>
</evidence>
<evidence type="ECO:0000305" key="6">
    <source>
    </source>
</evidence>
<evidence type="ECO:0000312" key="7">
    <source>
        <dbReference type="EMBL" id="AAG60389.1"/>
    </source>
</evidence>
<comment type="subcellular location">
    <subcellularLocation>
        <location evidence="3">Secreted</location>
    </subcellularLocation>
</comment>
<comment type="tissue specificity">
    <text evidence="5 6">Expressed by the venom duct.</text>
</comment>
<comment type="domain">
    <text evidence="4">The cysteine framework is V (CC-CC).</text>
</comment>
<comment type="PTM">
    <text evidence="4">Contains 2 disulfide bonds that can be either 'C1-C3, C2-C4' or 'C1-C4, C2-C3', since these disulfide connectivities have been observed for conotoxins with cysteine framework V (for examples, see AC P0DQQ7 and AC P81755).</text>
</comment>
<comment type="similarity">
    <text evidence="4">Belongs to the conotoxin T superfamily.</text>
</comment>
<name>CT111_CONTE</name>
<sequence>MRCLPVFVILLLLIASTPSDTVPLKTKDDMPQASFHGNARRTLQMLSKKQCCWYFDISCCITV</sequence>
<protein>
    <recommendedName>
        <fullName evidence="7">Conotoxin Tx-D0111</fullName>
    </recommendedName>
</protein>
<feature type="signal peptide" evidence="2">
    <location>
        <begin position="1"/>
        <end position="19"/>
    </location>
</feature>
<feature type="propeptide" id="PRO_0000274092" evidence="1">
    <location>
        <begin position="20"/>
        <end position="47"/>
    </location>
</feature>
<feature type="peptide" id="PRO_0000274093" description="Conotoxin Tx-D0111" evidence="3">
    <location>
        <begin position="50"/>
        <end position="63"/>
    </location>
</feature>
<dbReference type="EMBL" id="AF214961">
    <property type="protein sequence ID" value="AAG60389.1"/>
    <property type="molecule type" value="mRNA"/>
</dbReference>
<dbReference type="ConoServer" id="648">
    <property type="toxin name" value="Tx-D0111 precursor"/>
</dbReference>
<dbReference type="GO" id="GO:0005576">
    <property type="term" value="C:extracellular region"/>
    <property type="evidence" value="ECO:0007669"/>
    <property type="project" value="UniProtKB-SubCell"/>
</dbReference>
<dbReference type="GO" id="GO:0090729">
    <property type="term" value="F:toxin activity"/>
    <property type="evidence" value="ECO:0007669"/>
    <property type="project" value="UniProtKB-KW"/>
</dbReference>
<dbReference type="InterPro" id="IPR031565">
    <property type="entry name" value="T-conotoxin"/>
</dbReference>
<dbReference type="Pfam" id="PF16981">
    <property type="entry name" value="Chi-conotoxin"/>
    <property type="match status" value="1"/>
</dbReference>